<feature type="peptide" id="PRO_0000450235" description="Frenatin-2.1D" evidence="1">
    <location>
        <begin position="1"/>
        <end position="12"/>
    </location>
</feature>
<dbReference type="GO" id="GO:0005576">
    <property type="term" value="C:extracellular region"/>
    <property type="evidence" value="ECO:0007669"/>
    <property type="project" value="UniProtKB-SubCell"/>
</dbReference>
<dbReference type="GO" id="GO:0045087">
    <property type="term" value="P:innate immune response"/>
    <property type="evidence" value="ECO:0007669"/>
    <property type="project" value="UniProtKB-KW"/>
</dbReference>
<organism>
    <name type="scientific">Discoglossus sardus</name>
    <name type="common">Tyrrhenian painted frog</name>
    <dbReference type="NCBI Taxonomy" id="191474"/>
    <lineage>
        <taxon>Eukaryota</taxon>
        <taxon>Metazoa</taxon>
        <taxon>Chordata</taxon>
        <taxon>Craniata</taxon>
        <taxon>Vertebrata</taxon>
        <taxon>Euteleostomi</taxon>
        <taxon>Amphibia</taxon>
        <taxon>Batrachia</taxon>
        <taxon>Anura</taxon>
        <taxon>Alytidae</taxon>
        <taxon>Discoglossinae</taxon>
        <taxon>Discoglossus</taxon>
    </lineage>
</organism>
<reference key="1">
    <citation type="journal article" date="2013" name="Peptides">
        <title>An immunomodulatory peptide related to frenatin 2 from skin secretions of the Tyrrhenian painted frog Discoglossus sardus (Alytidae).</title>
        <authorList>
            <person name="Conlon J.M."/>
            <person name="Mechkarska M."/>
            <person name="Pantic J.M."/>
            <person name="Lukic M.L."/>
            <person name="Coquet L."/>
            <person name="Leprince J."/>
            <person name="Nielsen P.F."/>
            <person name="Rinaldi A.C."/>
        </authorList>
    </citation>
    <scope>PROTEIN SEQUENCE</scope>
    <scope>SUBCELLULAR LOCATION</scope>
    <scope>MASS SPECTROMETRY</scope>
</reference>
<name>FRE21_DISSA</name>
<evidence type="ECO:0000269" key="1">
    <source>
    </source>
</evidence>
<evidence type="ECO:0000303" key="2">
    <source>
    </source>
</evidence>
<evidence type="ECO:0000305" key="3"/>
<evidence type="ECO:0000305" key="4">
    <source>
    </source>
</evidence>
<keyword id="KW-0878">Amphibian defense peptide</keyword>
<keyword id="KW-0903">Direct protein sequencing</keyword>
<keyword id="KW-0391">Immunity</keyword>
<keyword id="KW-0399">Innate immunity</keyword>
<keyword id="KW-0964">Secreted</keyword>
<accession>P0DTV4</accession>
<protein>
    <recommendedName>
        <fullName evidence="2">Frenatin-2.1D</fullName>
    </recommendedName>
</protein>
<proteinExistence type="evidence at protein level"/>
<comment type="function">
    <text evidence="3">Probable defense peptide.</text>
</comment>
<comment type="subcellular location">
    <subcellularLocation>
        <location evidence="1">Secreted</location>
    </subcellularLocation>
</comment>
<comment type="tissue specificity">
    <text evidence="4">Expressed by the skin glands.</text>
</comment>
<comment type="mass spectrometry"/>
<comment type="similarity">
    <text evidence="3">Belongs to the frog skin active peptide (FSAP) family. Frenatin subfamily.</text>
</comment>
<sequence>GTLGNLPAPFPG</sequence>